<dbReference type="EMBL" id="HM233954">
    <property type="protein sequence ID" value="ADV16832.1"/>
    <property type="molecule type" value="mRNA"/>
</dbReference>
<dbReference type="SMR" id="E7CLP5"/>
<dbReference type="GO" id="GO:0005576">
    <property type="term" value="C:extracellular region"/>
    <property type="evidence" value="ECO:0007669"/>
    <property type="project" value="UniProtKB-SubCell"/>
</dbReference>
<dbReference type="GO" id="GO:0019871">
    <property type="term" value="F:sodium channel inhibitor activity"/>
    <property type="evidence" value="ECO:0007669"/>
    <property type="project" value="InterPro"/>
</dbReference>
<dbReference type="GO" id="GO:0090729">
    <property type="term" value="F:toxin activity"/>
    <property type="evidence" value="ECO:0007669"/>
    <property type="project" value="UniProtKB-KW"/>
</dbReference>
<dbReference type="GO" id="GO:0006952">
    <property type="term" value="P:defense response"/>
    <property type="evidence" value="ECO:0007669"/>
    <property type="project" value="InterPro"/>
</dbReference>
<dbReference type="CDD" id="cd23106">
    <property type="entry name" value="neurotoxins_LC_scorpion"/>
    <property type="match status" value="1"/>
</dbReference>
<dbReference type="Gene3D" id="3.30.30.10">
    <property type="entry name" value="Knottin, scorpion toxin-like"/>
    <property type="match status" value="1"/>
</dbReference>
<dbReference type="InterPro" id="IPR044062">
    <property type="entry name" value="LCN-type_CS_alpha_beta_dom"/>
</dbReference>
<dbReference type="InterPro" id="IPR003614">
    <property type="entry name" value="Scorpion_toxin-like"/>
</dbReference>
<dbReference type="InterPro" id="IPR036574">
    <property type="entry name" value="Scorpion_toxin-like_sf"/>
</dbReference>
<dbReference type="InterPro" id="IPR018218">
    <property type="entry name" value="Scorpion_toxinL"/>
</dbReference>
<dbReference type="InterPro" id="IPR002061">
    <property type="entry name" value="Scorpion_toxinL/defensin"/>
</dbReference>
<dbReference type="Pfam" id="PF00537">
    <property type="entry name" value="Toxin_3"/>
    <property type="match status" value="1"/>
</dbReference>
<dbReference type="PRINTS" id="PR00285">
    <property type="entry name" value="SCORPNTOXIN"/>
</dbReference>
<dbReference type="SMART" id="SM00505">
    <property type="entry name" value="Knot1"/>
    <property type="match status" value="1"/>
</dbReference>
<dbReference type="SUPFAM" id="SSF57095">
    <property type="entry name" value="Scorpion toxin-like"/>
    <property type="match status" value="1"/>
</dbReference>
<dbReference type="PROSITE" id="PS51863">
    <property type="entry name" value="LCN_CSAB"/>
    <property type="match status" value="1"/>
</dbReference>
<organism>
    <name type="scientific">Rhopalurus junceus</name>
    <name type="common">Caribbean blue scorpion</name>
    <dbReference type="NCBI Taxonomy" id="419285"/>
    <lineage>
        <taxon>Eukaryota</taxon>
        <taxon>Metazoa</taxon>
        <taxon>Ecdysozoa</taxon>
        <taxon>Arthropoda</taxon>
        <taxon>Chelicerata</taxon>
        <taxon>Arachnida</taxon>
        <taxon>Scorpiones</taxon>
        <taxon>Buthida</taxon>
        <taxon>Buthoidea</taxon>
        <taxon>Buthidae</taxon>
        <taxon>Rhopalurus</taxon>
    </lineage>
</organism>
<protein>
    <recommendedName>
        <fullName evidence="3">Putative beta-neurotoxin RjAa17f</fullName>
    </recommendedName>
</protein>
<proteinExistence type="inferred from homology"/>
<feature type="signal peptide" evidence="4">
    <location>
        <begin position="1"/>
        <end position="18"/>
    </location>
</feature>
<feature type="chain" id="PRO_0000413468" description="Putative beta-neurotoxin RjAa17f" evidence="4">
    <location>
        <begin position="19"/>
        <end position="83"/>
    </location>
</feature>
<feature type="domain" description="LCN-type CS-alpha/beta" evidence="5">
    <location>
        <begin position="19"/>
        <end position="82"/>
    </location>
</feature>
<feature type="disulfide bond" evidence="5">
    <location>
        <begin position="29"/>
        <end position="81"/>
    </location>
</feature>
<feature type="disulfide bond" evidence="5">
    <location>
        <begin position="33"/>
        <end position="55"/>
    </location>
</feature>
<feature type="disulfide bond" evidence="5">
    <location>
        <begin position="40"/>
        <end position="62"/>
    </location>
</feature>
<feature type="disulfide bond" evidence="5">
    <location>
        <begin position="44"/>
        <end position="64"/>
    </location>
</feature>
<reference evidence="8" key="1">
    <citation type="journal article" date="2011" name="Toxicon">
        <title>Biochemical and molecular characterization of the venom from the Cuban scorpion Rhopalurus junceus.</title>
        <authorList>
            <person name="Garcia-Gomez B.I."/>
            <person name="Coronas F.I."/>
            <person name="Restano-Cassulini R."/>
            <person name="Rodriguez R.R."/>
            <person name="Possani L.D."/>
        </authorList>
    </citation>
    <scope>NUCLEOTIDE SEQUENCE [MRNA]</scope>
    <source>
        <tissue evidence="8">Venom gland</tissue>
    </source>
</reference>
<keyword id="KW-1015">Disulfide bond</keyword>
<keyword id="KW-0872">Ion channel impairing toxin</keyword>
<keyword id="KW-0528">Neurotoxin</keyword>
<keyword id="KW-0964">Secreted</keyword>
<keyword id="KW-0732">Signal</keyword>
<keyword id="KW-0800">Toxin</keyword>
<keyword id="KW-0738">Voltage-gated sodium channel impairing toxin</keyword>
<sequence length="83" mass="9346">MKILIFIIASFMLIGVECKEGYPMGRNGCKIPCAINDNICKTECQAKWKQSDGYCYSPGMSCYCTNLPEDAEVWDFSNIKCRG</sequence>
<accession>E7CLP5</accession>
<evidence type="ECO:0000250" key="1"/>
<evidence type="ECO:0000250" key="2">
    <source>
        <dbReference type="UniProtKB" id="P15226"/>
    </source>
</evidence>
<evidence type="ECO:0000250" key="3">
    <source>
        <dbReference type="UniProtKB" id="Q1I176"/>
    </source>
</evidence>
<evidence type="ECO:0000255" key="4"/>
<evidence type="ECO:0000255" key="5">
    <source>
        <dbReference type="PROSITE-ProRule" id="PRU01210"/>
    </source>
</evidence>
<evidence type="ECO:0000305" key="6"/>
<evidence type="ECO:0000305" key="7">
    <source>
    </source>
</evidence>
<evidence type="ECO:0000312" key="8">
    <source>
        <dbReference type="EMBL" id="ADV16832.1"/>
    </source>
</evidence>
<comment type="function">
    <text evidence="1">Beta toxins bind voltage-independently at site-4 of sodium channels (Nav) and shift the voltage of activation toward more negative potentials thereby affecting sodium channel activation and promoting spontaneous and repetitive firing.</text>
</comment>
<comment type="subcellular location">
    <subcellularLocation>
        <location evidence="2">Secreted</location>
    </subcellularLocation>
</comment>
<comment type="tissue specificity">
    <text evidence="7">Expressed by the venom gland.</text>
</comment>
<comment type="domain">
    <text evidence="6">Has the structural arrangement of an alpha-helix connected to antiparallel beta-sheets by disulfide bonds (CS-alpha/beta).</text>
</comment>
<comment type="similarity">
    <text evidence="4">Belongs to the long (4 C-C) scorpion toxin superfamily. Sodium channel inhibitor family. Beta subfamily.</text>
</comment>
<name>SX17F_RHOJU</name>